<comment type="function">
    <text evidence="1">Specifically methylates the pseudouridine at position 1915 (m3Psi1915) in 23S rRNA.</text>
</comment>
<comment type="catalytic activity">
    <reaction evidence="1">
        <text>pseudouridine(1915) in 23S rRNA + S-adenosyl-L-methionine = N(3)-methylpseudouridine(1915) in 23S rRNA + S-adenosyl-L-homocysteine + H(+)</text>
        <dbReference type="Rhea" id="RHEA:42752"/>
        <dbReference type="Rhea" id="RHEA-COMP:10221"/>
        <dbReference type="Rhea" id="RHEA-COMP:10222"/>
        <dbReference type="ChEBI" id="CHEBI:15378"/>
        <dbReference type="ChEBI" id="CHEBI:57856"/>
        <dbReference type="ChEBI" id="CHEBI:59789"/>
        <dbReference type="ChEBI" id="CHEBI:65314"/>
        <dbReference type="ChEBI" id="CHEBI:74486"/>
        <dbReference type="EC" id="2.1.1.177"/>
    </reaction>
</comment>
<comment type="subunit">
    <text evidence="1">Homodimer.</text>
</comment>
<comment type="subcellular location">
    <subcellularLocation>
        <location evidence="1">Cytoplasm</location>
    </subcellularLocation>
</comment>
<comment type="similarity">
    <text evidence="1">Belongs to the RNA methyltransferase RlmH family.</text>
</comment>
<organism>
    <name type="scientific">Francisella tularensis subsp. holarctica (strain OSU18)</name>
    <dbReference type="NCBI Taxonomy" id="393011"/>
    <lineage>
        <taxon>Bacteria</taxon>
        <taxon>Pseudomonadati</taxon>
        <taxon>Pseudomonadota</taxon>
        <taxon>Gammaproteobacteria</taxon>
        <taxon>Thiotrichales</taxon>
        <taxon>Francisellaceae</taxon>
        <taxon>Francisella</taxon>
    </lineage>
</organism>
<evidence type="ECO:0000255" key="1">
    <source>
        <dbReference type="HAMAP-Rule" id="MF_00658"/>
    </source>
</evidence>
<reference key="1">
    <citation type="journal article" date="2006" name="J. Bacteriol.">
        <title>Chromosome rearrangement and diversification of Francisella tularensis revealed by the type B (OSU18) genome sequence.</title>
        <authorList>
            <person name="Petrosino J.F."/>
            <person name="Xiang Q."/>
            <person name="Karpathy S.E."/>
            <person name="Jiang H."/>
            <person name="Yerrapragada S."/>
            <person name="Liu Y."/>
            <person name="Gioia J."/>
            <person name="Hemphill L."/>
            <person name="Gonzalez A."/>
            <person name="Raghavan T.M."/>
            <person name="Uzman A."/>
            <person name="Fox G.E."/>
            <person name="Highlander S."/>
            <person name="Reichard M."/>
            <person name="Morton R.J."/>
            <person name="Clinkenbeard K.D."/>
            <person name="Weinstock G.M."/>
        </authorList>
    </citation>
    <scope>NUCLEOTIDE SEQUENCE [LARGE SCALE GENOMIC DNA]</scope>
    <source>
        <strain>OSU18</strain>
    </source>
</reference>
<protein>
    <recommendedName>
        <fullName evidence="1">Ribosomal RNA large subunit methyltransferase H</fullName>
        <ecNumber evidence="1">2.1.1.177</ecNumber>
    </recommendedName>
    <alternativeName>
        <fullName evidence="1">23S rRNA (pseudouridine1915-N3)-methyltransferase</fullName>
    </alternativeName>
    <alternativeName>
        <fullName evidence="1">23S rRNA m3Psi1915 methyltransferase</fullName>
    </alternativeName>
    <alternativeName>
        <fullName evidence="1">rRNA (pseudouridine-N3-)-methyltransferase RlmH</fullName>
    </alternativeName>
</protein>
<gene>
    <name evidence="1" type="primary">rlmH</name>
    <name type="ordered locus">FTH_1658</name>
</gene>
<feature type="chain" id="PRO_0000260557" description="Ribosomal RNA large subunit methyltransferase H">
    <location>
        <begin position="1"/>
        <end position="166"/>
    </location>
</feature>
<feature type="binding site" evidence="1">
    <location>
        <position position="85"/>
    </location>
    <ligand>
        <name>S-adenosyl-L-methionine</name>
        <dbReference type="ChEBI" id="CHEBI:59789"/>
    </ligand>
</feature>
<feature type="binding site" evidence="1">
    <location>
        <position position="116"/>
    </location>
    <ligand>
        <name>S-adenosyl-L-methionine</name>
        <dbReference type="ChEBI" id="CHEBI:59789"/>
    </ligand>
</feature>
<feature type="binding site" evidence="1">
    <location>
        <begin position="135"/>
        <end position="140"/>
    </location>
    <ligand>
        <name>S-adenosyl-L-methionine</name>
        <dbReference type="ChEBI" id="CHEBI:59789"/>
    </ligand>
</feature>
<sequence>MMAFLLDIITFLQISFSTNIFRINYKWVSDGYDEYKKRLSKLIPLELIELPIAKRTKTGNPKLWMEQEAKTILGKLNDSDHLVILDVNSKIISTEELADKMQNWKFNNPNVVILIGGPDGIDQSIKDIAKEKISISKMTFPHPLVRIIAEQLYRAYTILEGHPYHK</sequence>
<keyword id="KW-0963">Cytoplasm</keyword>
<keyword id="KW-0489">Methyltransferase</keyword>
<keyword id="KW-0698">rRNA processing</keyword>
<keyword id="KW-0949">S-adenosyl-L-methionine</keyword>
<keyword id="KW-0808">Transferase</keyword>
<name>RLMH_FRATO</name>
<proteinExistence type="inferred from homology"/>
<accession>Q0BKF0</accession>
<dbReference type="EC" id="2.1.1.177" evidence="1"/>
<dbReference type="EMBL" id="CP000437">
    <property type="protein sequence ID" value="ABI83434.1"/>
    <property type="molecule type" value="Genomic_DNA"/>
</dbReference>
<dbReference type="SMR" id="Q0BKF0"/>
<dbReference type="KEGG" id="fth:FTH_1658"/>
<dbReference type="GO" id="GO:0005737">
    <property type="term" value="C:cytoplasm"/>
    <property type="evidence" value="ECO:0007669"/>
    <property type="project" value="UniProtKB-SubCell"/>
</dbReference>
<dbReference type="GO" id="GO:0070038">
    <property type="term" value="F:rRNA (pseudouridine-N3-)-methyltransferase activity"/>
    <property type="evidence" value="ECO:0007669"/>
    <property type="project" value="UniProtKB-UniRule"/>
</dbReference>
<dbReference type="CDD" id="cd18081">
    <property type="entry name" value="RlmH-like"/>
    <property type="match status" value="1"/>
</dbReference>
<dbReference type="Gene3D" id="3.40.1280.10">
    <property type="match status" value="1"/>
</dbReference>
<dbReference type="HAMAP" id="MF_00658">
    <property type="entry name" value="23SrRNA_methyltr_H"/>
    <property type="match status" value="1"/>
</dbReference>
<dbReference type="InterPro" id="IPR029028">
    <property type="entry name" value="Alpha/beta_knot_MTases"/>
</dbReference>
<dbReference type="InterPro" id="IPR003742">
    <property type="entry name" value="RlmH-like"/>
</dbReference>
<dbReference type="InterPro" id="IPR029026">
    <property type="entry name" value="tRNA_m1G_MTases_N"/>
</dbReference>
<dbReference type="NCBIfam" id="NF000986">
    <property type="entry name" value="PRK00103.1-4"/>
    <property type="match status" value="1"/>
</dbReference>
<dbReference type="PANTHER" id="PTHR33603">
    <property type="entry name" value="METHYLTRANSFERASE"/>
    <property type="match status" value="1"/>
</dbReference>
<dbReference type="PANTHER" id="PTHR33603:SF1">
    <property type="entry name" value="RIBOSOMAL RNA LARGE SUBUNIT METHYLTRANSFERASE H"/>
    <property type="match status" value="1"/>
</dbReference>
<dbReference type="Pfam" id="PF02590">
    <property type="entry name" value="SPOUT_MTase"/>
    <property type="match status" value="1"/>
</dbReference>
<dbReference type="PIRSF" id="PIRSF004505">
    <property type="entry name" value="MT_bac"/>
    <property type="match status" value="1"/>
</dbReference>
<dbReference type="SUPFAM" id="SSF75217">
    <property type="entry name" value="alpha/beta knot"/>
    <property type="match status" value="1"/>
</dbReference>